<gene>
    <name evidence="6" type="primary">Lvrn</name>
    <name evidence="6" type="synonym">Aqpep</name>
</gene>
<feature type="chain" id="PRO_0000247069" description="Aminopeptidase Q">
    <location>
        <begin position="1"/>
        <end position="559"/>
    </location>
</feature>
<feature type="topological domain" description="Cytoplasmic" evidence="2">
    <location>
        <begin position="1"/>
        <end position="13"/>
    </location>
</feature>
<feature type="transmembrane region" description="Helical; Signal-anchor for type II membrane protein" evidence="3">
    <location>
        <begin position="14"/>
        <end position="34"/>
    </location>
</feature>
<feature type="topological domain" description="Lumenal" evidence="2">
    <location>
        <begin position="35"/>
        <end position="559"/>
    </location>
</feature>
<feature type="active site" description="Proton acceptor" evidence="4">
    <location>
        <position position="413"/>
    </location>
</feature>
<feature type="binding site" evidence="1">
    <location>
        <position position="237"/>
    </location>
    <ligand>
        <name>substrate</name>
    </ligand>
</feature>
<feature type="binding site" evidence="1">
    <location>
        <begin position="376"/>
        <end position="380"/>
    </location>
    <ligand>
        <name>substrate</name>
    </ligand>
</feature>
<feature type="binding site" evidence="4">
    <location>
        <position position="412"/>
    </location>
    <ligand>
        <name>Zn(2+)</name>
        <dbReference type="ChEBI" id="CHEBI:29105"/>
        <note>catalytic</note>
    </ligand>
</feature>
<feature type="binding site" evidence="4">
    <location>
        <position position="416"/>
    </location>
    <ligand>
        <name>Zn(2+)</name>
        <dbReference type="ChEBI" id="CHEBI:29105"/>
        <note>catalytic</note>
    </ligand>
</feature>
<feature type="binding site" evidence="4">
    <location>
        <position position="435"/>
    </location>
    <ligand>
        <name>Zn(2+)</name>
        <dbReference type="ChEBI" id="CHEBI:29105"/>
        <note>catalytic</note>
    </ligand>
</feature>
<feature type="site" description="Transition state stabilizer" evidence="1">
    <location>
        <position position="501"/>
    </location>
</feature>
<feature type="glycosylation site" description="N-linked (GlcNAc...) asparagine" evidence="3">
    <location>
        <position position="121"/>
    </location>
</feature>
<feature type="glycosylation site" description="N-linked (GlcNAc...) asparagine" evidence="3">
    <location>
        <position position="129"/>
    </location>
</feature>
<feature type="glycosylation site" description="N-linked (GlcNAc...) asparagine" evidence="3">
    <location>
        <position position="258"/>
    </location>
</feature>
<feature type="glycosylation site" description="N-linked (GlcNAc...) asparagine" evidence="3">
    <location>
        <position position="285"/>
    </location>
</feature>
<feature type="glycosylation site" description="N-linked (GlcNAc...) asparagine" evidence="3">
    <location>
        <position position="343"/>
    </location>
</feature>
<feature type="sequence conflict" description="In Ref. 1; BAB29490." evidence="5" ref="1">
    <original>N</original>
    <variation>S</variation>
    <location>
        <position position="335"/>
    </location>
</feature>
<proteinExistence type="evidence at protein level"/>
<protein>
    <recommendedName>
        <fullName evidence="5">Aminopeptidase Q</fullName>
        <shortName evidence="5">AP-Q</shortName>
        <shortName evidence="2">APQ</shortName>
        <ecNumber evidence="2">3.4.11.-</ecNumber>
    </recommendedName>
    <alternativeName>
        <fullName evidence="2">Laeverin</fullName>
    </alternativeName>
</protein>
<accession>Q2KHK3</accession>
<accession>Q9D633</accession>
<name>AMPQ_MOUSE</name>
<keyword id="KW-0325">Glycoprotein</keyword>
<keyword id="KW-0378">Hydrolase</keyword>
<keyword id="KW-0472">Membrane</keyword>
<keyword id="KW-0479">Metal-binding</keyword>
<keyword id="KW-0482">Metalloprotease</keyword>
<keyword id="KW-0645">Protease</keyword>
<keyword id="KW-1185">Reference proteome</keyword>
<keyword id="KW-0735">Signal-anchor</keyword>
<keyword id="KW-0812">Transmembrane</keyword>
<keyword id="KW-1133">Transmembrane helix</keyword>
<keyword id="KW-0862">Zinc</keyword>
<comment type="function">
    <text evidence="2">Metalloprotease which may be important for placentation by regulating biological activity of key peptides at the embryo-maternal interface. On synthetic substrates it shows a marked preference for Leu-4-methylcoumaryl-7-amide (Leu-MCA) over Met-MCA, Arg-LCA and Lys-LCA. Cleaves the N-terminal amino acid of several peptides such as angiotensin-3, kisspeptin-10 and endokinin C.</text>
</comment>
<comment type="cofactor">
    <cofactor evidence="1">
        <name>Zn(2+)</name>
        <dbReference type="ChEBI" id="CHEBI:29105"/>
    </cofactor>
    <text evidence="1">Binds 1 zinc ion per subunit.</text>
</comment>
<comment type="activity regulation">
    <text evidence="2">Inhibited by bestatin.</text>
</comment>
<comment type="subunit">
    <text evidence="2">Homodimer.</text>
</comment>
<comment type="subcellular location">
    <subcellularLocation>
        <location evidence="2">Membrane</location>
        <topology evidence="2">Single-pass type II membrane protein</topology>
    </subcellularLocation>
</comment>
<comment type="PTM">
    <text evidence="2">N-glycosylated.</text>
</comment>
<comment type="similarity">
    <text evidence="5">Belongs to the peptidase M1 family.</text>
</comment>
<dbReference type="EC" id="3.4.11.-" evidence="2"/>
<dbReference type="EMBL" id="AK014652">
    <property type="protein sequence ID" value="BAB29490.1"/>
    <property type="molecule type" value="mRNA"/>
</dbReference>
<dbReference type="EMBL" id="BC113158">
    <property type="protein sequence ID" value="AAI13159.1"/>
    <property type="molecule type" value="mRNA"/>
</dbReference>
<dbReference type="SMR" id="Q2KHK3"/>
<dbReference type="FunCoup" id="Q2KHK3">
    <property type="interactions" value="2"/>
</dbReference>
<dbReference type="STRING" id="10090.ENSMUSP00000025358"/>
<dbReference type="MEROPS" id="M01.026"/>
<dbReference type="GlyCosmos" id="Q2KHK3">
    <property type="glycosylation" value="5 sites, No reported glycans"/>
</dbReference>
<dbReference type="GlyGen" id="Q2KHK3">
    <property type="glycosylation" value="6 sites"/>
</dbReference>
<dbReference type="PhosphoSitePlus" id="Q2KHK3"/>
<dbReference type="PaxDb" id="10090-ENSMUSP00000025358"/>
<dbReference type="ProteomicsDB" id="281975"/>
<dbReference type="UCSC" id="uc008evx.1">
    <property type="organism name" value="mouse"/>
</dbReference>
<dbReference type="AGR" id="MGI:1921824"/>
<dbReference type="MGI" id="MGI:1921824">
    <property type="gene designation" value="Lvrn"/>
</dbReference>
<dbReference type="eggNOG" id="KOG1046">
    <property type="taxonomic scope" value="Eukaryota"/>
</dbReference>
<dbReference type="InParanoid" id="Q2KHK3"/>
<dbReference type="PhylomeDB" id="Q2KHK3"/>
<dbReference type="ChiTaRS" id="Lvrn">
    <property type="organism name" value="mouse"/>
</dbReference>
<dbReference type="PRO" id="PR:Q2KHK3"/>
<dbReference type="Proteomes" id="UP000000589">
    <property type="component" value="Unplaced"/>
</dbReference>
<dbReference type="RNAct" id="Q2KHK3">
    <property type="molecule type" value="protein"/>
</dbReference>
<dbReference type="GO" id="GO:0016020">
    <property type="term" value="C:membrane"/>
    <property type="evidence" value="ECO:0007669"/>
    <property type="project" value="UniProtKB-SubCell"/>
</dbReference>
<dbReference type="GO" id="GO:0008237">
    <property type="term" value="F:metallopeptidase activity"/>
    <property type="evidence" value="ECO:0007669"/>
    <property type="project" value="UniProtKB-KW"/>
</dbReference>
<dbReference type="GO" id="GO:0008270">
    <property type="term" value="F:zinc ion binding"/>
    <property type="evidence" value="ECO:0007669"/>
    <property type="project" value="InterPro"/>
</dbReference>
<dbReference type="GO" id="GO:0006508">
    <property type="term" value="P:proteolysis"/>
    <property type="evidence" value="ECO:0007669"/>
    <property type="project" value="UniProtKB-KW"/>
</dbReference>
<dbReference type="CDD" id="cd09601">
    <property type="entry name" value="M1_APN-Q_like"/>
    <property type="match status" value="1"/>
</dbReference>
<dbReference type="FunFam" id="2.60.40.1730:FF:000012">
    <property type="entry name" value="Aminopeptidase N"/>
    <property type="match status" value="1"/>
</dbReference>
<dbReference type="FunFam" id="1.10.390.10:FF:000016">
    <property type="entry name" value="Glutamyl aminopeptidase"/>
    <property type="match status" value="1"/>
</dbReference>
<dbReference type="Gene3D" id="1.10.390.10">
    <property type="entry name" value="Neutral Protease Domain 2"/>
    <property type="match status" value="1"/>
</dbReference>
<dbReference type="Gene3D" id="2.60.40.1730">
    <property type="entry name" value="tricorn interacting facor f3 domain"/>
    <property type="match status" value="1"/>
</dbReference>
<dbReference type="InterPro" id="IPR045357">
    <property type="entry name" value="Aminopeptidase_N-like_N"/>
</dbReference>
<dbReference type="InterPro" id="IPR042097">
    <property type="entry name" value="Aminopeptidase_N-like_N_sf"/>
</dbReference>
<dbReference type="InterPro" id="IPR034016">
    <property type="entry name" value="M1_APN-typ"/>
</dbReference>
<dbReference type="InterPro" id="IPR001930">
    <property type="entry name" value="Peptidase_M1"/>
</dbReference>
<dbReference type="InterPro" id="IPR050344">
    <property type="entry name" value="Peptidase_M1_aminopeptidases"/>
</dbReference>
<dbReference type="InterPro" id="IPR014782">
    <property type="entry name" value="Peptidase_M1_dom"/>
</dbReference>
<dbReference type="InterPro" id="IPR027268">
    <property type="entry name" value="Peptidase_M4/M1_CTD_sf"/>
</dbReference>
<dbReference type="PANTHER" id="PTHR11533:SF31">
    <property type="entry name" value="AMINOPEPTIDASE Q"/>
    <property type="match status" value="1"/>
</dbReference>
<dbReference type="PANTHER" id="PTHR11533">
    <property type="entry name" value="PROTEASE M1 ZINC METALLOPROTEASE"/>
    <property type="match status" value="1"/>
</dbReference>
<dbReference type="Pfam" id="PF01433">
    <property type="entry name" value="Peptidase_M1"/>
    <property type="match status" value="1"/>
</dbReference>
<dbReference type="Pfam" id="PF17900">
    <property type="entry name" value="Peptidase_M1_N"/>
    <property type="match status" value="1"/>
</dbReference>
<dbReference type="PRINTS" id="PR00756">
    <property type="entry name" value="ALADIPTASE"/>
</dbReference>
<dbReference type="SUPFAM" id="SSF63737">
    <property type="entry name" value="Leukotriene A4 hydrolase N-terminal domain"/>
    <property type="match status" value="1"/>
</dbReference>
<dbReference type="SUPFAM" id="SSF55486">
    <property type="entry name" value="Metalloproteases ('zincins'), catalytic domain"/>
    <property type="match status" value="1"/>
</dbReference>
<dbReference type="PROSITE" id="PS00142">
    <property type="entry name" value="ZINC_PROTEASE"/>
    <property type="match status" value="1"/>
</dbReference>
<reference key="1">
    <citation type="journal article" date="2005" name="Science">
        <title>The transcriptional landscape of the mammalian genome.</title>
        <authorList>
            <person name="Carninci P."/>
            <person name="Kasukawa T."/>
            <person name="Katayama S."/>
            <person name="Gough J."/>
            <person name="Frith M.C."/>
            <person name="Maeda N."/>
            <person name="Oyama R."/>
            <person name="Ravasi T."/>
            <person name="Lenhard B."/>
            <person name="Wells C."/>
            <person name="Kodzius R."/>
            <person name="Shimokawa K."/>
            <person name="Bajic V.B."/>
            <person name="Brenner S.E."/>
            <person name="Batalov S."/>
            <person name="Forrest A.R."/>
            <person name="Zavolan M."/>
            <person name="Davis M.J."/>
            <person name="Wilming L.G."/>
            <person name="Aidinis V."/>
            <person name="Allen J.E."/>
            <person name="Ambesi-Impiombato A."/>
            <person name="Apweiler R."/>
            <person name="Aturaliya R.N."/>
            <person name="Bailey T.L."/>
            <person name="Bansal M."/>
            <person name="Baxter L."/>
            <person name="Beisel K.W."/>
            <person name="Bersano T."/>
            <person name="Bono H."/>
            <person name="Chalk A.M."/>
            <person name="Chiu K.P."/>
            <person name="Choudhary V."/>
            <person name="Christoffels A."/>
            <person name="Clutterbuck D.R."/>
            <person name="Crowe M.L."/>
            <person name="Dalla E."/>
            <person name="Dalrymple B.P."/>
            <person name="de Bono B."/>
            <person name="Della Gatta G."/>
            <person name="di Bernardo D."/>
            <person name="Down T."/>
            <person name="Engstrom P."/>
            <person name="Fagiolini M."/>
            <person name="Faulkner G."/>
            <person name="Fletcher C.F."/>
            <person name="Fukushima T."/>
            <person name="Furuno M."/>
            <person name="Futaki S."/>
            <person name="Gariboldi M."/>
            <person name="Georgii-Hemming P."/>
            <person name="Gingeras T.R."/>
            <person name="Gojobori T."/>
            <person name="Green R.E."/>
            <person name="Gustincich S."/>
            <person name="Harbers M."/>
            <person name="Hayashi Y."/>
            <person name="Hensch T.K."/>
            <person name="Hirokawa N."/>
            <person name="Hill D."/>
            <person name="Huminiecki L."/>
            <person name="Iacono M."/>
            <person name="Ikeo K."/>
            <person name="Iwama A."/>
            <person name="Ishikawa T."/>
            <person name="Jakt M."/>
            <person name="Kanapin A."/>
            <person name="Katoh M."/>
            <person name="Kawasawa Y."/>
            <person name="Kelso J."/>
            <person name="Kitamura H."/>
            <person name="Kitano H."/>
            <person name="Kollias G."/>
            <person name="Krishnan S.P."/>
            <person name="Kruger A."/>
            <person name="Kummerfeld S.K."/>
            <person name="Kurochkin I.V."/>
            <person name="Lareau L.F."/>
            <person name="Lazarevic D."/>
            <person name="Lipovich L."/>
            <person name="Liu J."/>
            <person name="Liuni S."/>
            <person name="McWilliam S."/>
            <person name="Madan Babu M."/>
            <person name="Madera M."/>
            <person name="Marchionni L."/>
            <person name="Matsuda H."/>
            <person name="Matsuzawa S."/>
            <person name="Miki H."/>
            <person name="Mignone F."/>
            <person name="Miyake S."/>
            <person name="Morris K."/>
            <person name="Mottagui-Tabar S."/>
            <person name="Mulder N."/>
            <person name="Nakano N."/>
            <person name="Nakauchi H."/>
            <person name="Ng P."/>
            <person name="Nilsson R."/>
            <person name="Nishiguchi S."/>
            <person name="Nishikawa S."/>
            <person name="Nori F."/>
            <person name="Ohara O."/>
            <person name="Okazaki Y."/>
            <person name="Orlando V."/>
            <person name="Pang K.C."/>
            <person name="Pavan W.J."/>
            <person name="Pavesi G."/>
            <person name="Pesole G."/>
            <person name="Petrovsky N."/>
            <person name="Piazza S."/>
            <person name="Reed J."/>
            <person name="Reid J.F."/>
            <person name="Ring B.Z."/>
            <person name="Ringwald M."/>
            <person name="Rost B."/>
            <person name="Ruan Y."/>
            <person name="Salzberg S.L."/>
            <person name="Sandelin A."/>
            <person name="Schneider C."/>
            <person name="Schoenbach C."/>
            <person name="Sekiguchi K."/>
            <person name="Semple C.A."/>
            <person name="Seno S."/>
            <person name="Sessa L."/>
            <person name="Sheng Y."/>
            <person name="Shibata Y."/>
            <person name="Shimada H."/>
            <person name="Shimada K."/>
            <person name="Silva D."/>
            <person name="Sinclair B."/>
            <person name="Sperling S."/>
            <person name="Stupka E."/>
            <person name="Sugiura K."/>
            <person name="Sultana R."/>
            <person name="Takenaka Y."/>
            <person name="Taki K."/>
            <person name="Tammoja K."/>
            <person name="Tan S.L."/>
            <person name="Tang S."/>
            <person name="Taylor M.S."/>
            <person name="Tegner J."/>
            <person name="Teichmann S.A."/>
            <person name="Ueda H.R."/>
            <person name="van Nimwegen E."/>
            <person name="Verardo R."/>
            <person name="Wei C.L."/>
            <person name="Yagi K."/>
            <person name="Yamanishi H."/>
            <person name="Zabarovsky E."/>
            <person name="Zhu S."/>
            <person name="Zimmer A."/>
            <person name="Hide W."/>
            <person name="Bult C."/>
            <person name="Grimmond S.M."/>
            <person name="Teasdale R.D."/>
            <person name="Liu E.T."/>
            <person name="Brusic V."/>
            <person name="Quackenbush J."/>
            <person name="Wahlestedt C."/>
            <person name="Mattick J.S."/>
            <person name="Hume D.A."/>
            <person name="Kai C."/>
            <person name="Sasaki D."/>
            <person name="Tomaru Y."/>
            <person name="Fukuda S."/>
            <person name="Kanamori-Katayama M."/>
            <person name="Suzuki M."/>
            <person name="Aoki J."/>
            <person name="Arakawa T."/>
            <person name="Iida J."/>
            <person name="Imamura K."/>
            <person name="Itoh M."/>
            <person name="Kato T."/>
            <person name="Kawaji H."/>
            <person name="Kawagashira N."/>
            <person name="Kawashima T."/>
            <person name="Kojima M."/>
            <person name="Kondo S."/>
            <person name="Konno H."/>
            <person name="Nakano K."/>
            <person name="Ninomiya N."/>
            <person name="Nishio T."/>
            <person name="Okada M."/>
            <person name="Plessy C."/>
            <person name="Shibata K."/>
            <person name="Shiraki T."/>
            <person name="Suzuki S."/>
            <person name="Tagami M."/>
            <person name="Waki K."/>
            <person name="Watahiki A."/>
            <person name="Okamura-Oho Y."/>
            <person name="Suzuki H."/>
            <person name="Kawai J."/>
            <person name="Hayashizaki Y."/>
        </authorList>
    </citation>
    <scope>NUCLEOTIDE SEQUENCE [LARGE SCALE MRNA]</scope>
    <source>
        <strain>C57BL/6J</strain>
        <tissue>Head</tissue>
    </source>
</reference>
<reference key="2">
    <citation type="journal article" date="2004" name="Genome Res.">
        <title>The status, quality, and expansion of the NIH full-length cDNA project: the Mammalian Gene Collection (MGC).</title>
        <authorList>
            <consortium name="The MGC Project Team"/>
        </authorList>
    </citation>
    <scope>NUCLEOTIDE SEQUENCE [LARGE SCALE MRNA]</scope>
</reference>
<reference key="3">
    <citation type="journal article" date="2010" name="Cell">
        <title>A tissue-specific atlas of mouse protein phosphorylation and expression.</title>
        <authorList>
            <person name="Huttlin E.L."/>
            <person name="Jedrychowski M.P."/>
            <person name="Elias J.E."/>
            <person name="Goswami T."/>
            <person name="Rad R."/>
            <person name="Beausoleil S.A."/>
            <person name="Villen J."/>
            <person name="Haas W."/>
            <person name="Sowa M.E."/>
            <person name="Gygi S.P."/>
        </authorList>
    </citation>
    <scope>IDENTIFICATION BY MASS SPECTROMETRY [LARGE SCALE ANALYSIS]</scope>
    <source>
        <tissue>Pancreas</tissue>
    </source>
</reference>
<evidence type="ECO:0000250" key="1"/>
<evidence type="ECO:0000250" key="2">
    <source>
        <dbReference type="UniProtKB" id="Q6Q4G3"/>
    </source>
</evidence>
<evidence type="ECO:0000255" key="3"/>
<evidence type="ECO:0000255" key="4">
    <source>
        <dbReference type="PROSITE-ProRule" id="PRU10095"/>
    </source>
</evidence>
<evidence type="ECO:0000305" key="5"/>
<evidence type="ECO:0000312" key="6">
    <source>
        <dbReference type="MGI" id="MGI:1921824"/>
    </source>
</evidence>
<sequence length="559" mass="63338">MSRPFSSGVYVSRGVALLLAALTAVLLLVLVALASLYGSCAHVQPSEQGNSRVKNTSLWPPGGQEWALPTPAQEPTVGTSQDLGPPSGPWDHLRLPPWLVPLHYDLELWPWLQPDKLSPPNLTFTGRVNITVRCTVASSRLLLHSFLLNYKQVEVWGPLAQDTRNATVGRVQVEKVWFAPDMQFVVLDLGQSLEPGSRYELSFHFSGQVLQVGLEGLFLNLYHDEDELRALVATQMEPTFARHVFPCFDEPALKATFNITVIHHPGYAALSNMPQLGQSERIDVNGSRWTVTTFHTTPRMPTYLVALVVCDLDHISRTERGKEIRVWARKDDIANGYLDFAANITGPIFSFLEDLFNISYRLPKTDIVALPIFASGAMENWGLLIFDESSLLLEPEDELTEKRAMILSIIAHEVGHQWFGNLVTMSWWNNIWLNEGFASYFELELTNYFYPKVPMNMIFFFTVLHGILGEDHALESRAVSTAVENFTETSEINRLFDLYTYKKGACMAWMLASFLSPHLFINALKSYLETFSYSNAEQDDLWRHIQMVIVPFRHFLAEH</sequence>
<organism>
    <name type="scientific">Mus musculus</name>
    <name type="common">Mouse</name>
    <dbReference type="NCBI Taxonomy" id="10090"/>
    <lineage>
        <taxon>Eukaryota</taxon>
        <taxon>Metazoa</taxon>
        <taxon>Chordata</taxon>
        <taxon>Craniata</taxon>
        <taxon>Vertebrata</taxon>
        <taxon>Euteleostomi</taxon>
        <taxon>Mammalia</taxon>
        <taxon>Eutheria</taxon>
        <taxon>Euarchontoglires</taxon>
        <taxon>Glires</taxon>
        <taxon>Rodentia</taxon>
        <taxon>Myomorpha</taxon>
        <taxon>Muroidea</taxon>
        <taxon>Muridae</taxon>
        <taxon>Murinae</taxon>
        <taxon>Mus</taxon>
        <taxon>Mus</taxon>
    </lineage>
</organism>